<sequence>MTEPLKPRIDFDGPLEVDQNPKFRAQQTFDENQAQNFAPATLDEAQEEEGQVEAVMDAALRPKRSLWRKMVMGGLALFGASVVGQGVQWTMNAWQTQDWVALGGCAAGALIIGAGVGSVVTEWRRLWRLRQRAHERDEARDLLHSHGTGKGRAFCEKLAQQAGIDQSHPALQRWYASIHETQNDREVVSLYAHLVQPVLDAQARREISRSAAESTLMIAVSPLALVDMAFIAWRNLRLINRIATLYGIELGYYSRLRLFKLVLLNIAFAGASELVREVGMDWMSQDLAARLSTRAAQGIGAGLLTARLGIKAMELCRPLPWIDDDKPRLGDFRRQLIGQVKETLQKGKTPSEK</sequence>
<dbReference type="EMBL" id="CP000802">
    <property type="protein sequence ID" value="ABV05768.1"/>
    <property type="molecule type" value="Genomic_DNA"/>
</dbReference>
<dbReference type="RefSeq" id="WP_000138728.1">
    <property type="nucleotide sequence ID" value="NC_009800.1"/>
</dbReference>
<dbReference type="SMR" id="A7ZZR4"/>
<dbReference type="KEGG" id="ecx:EcHS_A1437"/>
<dbReference type="HOGENOM" id="CLU_057693_2_0_6"/>
<dbReference type="GO" id="GO:0005886">
    <property type="term" value="C:plasma membrane"/>
    <property type="evidence" value="ECO:0007669"/>
    <property type="project" value="UniProtKB-SubCell"/>
</dbReference>
<dbReference type="HAMAP" id="MF_01085">
    <property type="entry name" value="UPF0283"/>
    <property type="match status" value="1"/>
</dbReference>
<dbReference type="InterPro" id="IPR021147">
    <property type="entry name" value="DUF697"/>
</dbReference>
<dbReference type="InterPro" id="IPR006507">
    <property type="entry name" value="UPF0283"/>
</dbReference>
<dbReference type="NCBIfam" id="TIGR01620">
    <property type="entry name" value="hyp_HI0043"/>
    <property type="match status" value="1"/>
</dbReference>
<dbReference type="PANTHER" id="PTHR39342">
    <property type="entry name" value="UPF0283 MEMBRANE PROTEIN YCJF"/>
    <property type="match status" value="1"/>
</dbReference>
<dbReference type="PANTHER" id="PTHR39342:SF1">
    <property type="entry name" value="UPF0283 MEMBRANE PROTEIN YCJF"/>
    <property type="match status" value="1"/>
</dbReference>
<dbReference type="Pfam" id="PF05128">
    <property type="entry name" value="DUF697"/>
    <property type="match status" value="1"/>
</dbReference>
<feature type="chain" id="PRO_1000064836" description="UPF0283 membrane protein YcjF">
    <location>
        <begin position="1"/>
        <end position="353"/>
    </location>
</feature>
<feature type="transmembrane region" description="Helical" evidence="1">
    <location>
        <begin position="70"/>
        <end position="90"/>
    </location>
</feature>
<feature type="transmembrane region" description="Helical" evidence="1">
    <location>
        <begin position="100"/>
        <end position="120"/>
    </location>
</feature>
<feature type="transmembrane region" description="Helical" evidence="1">
    <location>
        <begin position="213"/>
        <end position="233"/>
    </location>
</feature>
<organism>
    <name type="scientific">Escherichia coli O9:H4 (strain HS)</name>
    <dbReference type="NCBI Taxonomy" id="331112"/>
    <lineage>
        <taxon>Bacteria</taxon>
        <taxon>Pseudomonadati</taxon>
        <taxon>Pseudomonadota</taxon>
        <taxon>Gammaproteobacteria</taxon>
        <taxon>Enterobacterales</taxon>
        <taxon>Enterobacteriaceae</taxon>
        <taxon>Escherichia</taxon>
    </lineage>
</organism>
<keyword id="KW-0997">Cell inner membrane</keyword>
<keyword id="KW-1003">Cell membrane</keyword>
<keyword id="KW-0472">Membrane</keyword>
<keyword id="KW-0812">Transmembrane</keyword>
<keyword id="KW-1133">Transmembrane helix</keyword>
<name>YCJF_ECOHS</name>
<evidence type="ECO:0000255" key="1">
    <source>
        <dbReference type="HAMAP-Rule" id="MF_01085"/>
    </source>
</evidence>
<comment type="subcellular location">
    <subcellularLocation>
        <location evidence="1">Cell inner membrane</location>
        <topology evidence="1">Multi-pass membrane protein</topology>
    </subcellularLocation>
</comment>
<comment type="similarity">
    <text evidence="1">Belongs to the UPF0283 family.</text>
</comment>
<proteinExistence type="inferred from homology"/>
<gene>
    <name evidence="1" type="primary">ycjF</name>
    <name type="ordered locus">EcHS_A1437</name>
</gene>
<reference key="1">
    <citation type="journal article" date="2008" name="J. Bacteriol.">
        <title>The pangenome structure of Escherichia coli: comparative genomic analysis of E. coli commensal and pathogenic isolates.</title>
        <authorList>
            <person name="Rasko D.A."/>
            <person name="Rosovitz M.J."/>
            <person name="Myers G.S.A."/>
            <person name="Mongodin E.F."/>
            <person name="Fricke W.F."/>
            <person name="Gajer P."/>
            <person name="Crabtree J."/>
            <person name="Sebaihia M."/>
            <person name="Thomson N.R."/>
            <person name="Chaudhuri R."/>
            <person name="Henderson I.R."/>
            <person name="Sperandio V."/>
            <person name="Ravel J."/>
        </authorList>
    </citation>
    <scope>NUCLEOTIDE SEQUENCE [LARGE SCALE GENOMIC DNA]</scope>
    <source>
        <strain>HS</strain>
    </source>
</reference>
<protein>
    <recommendedName>
        <fullName evidence="1">UPF0283 membrane protein YcjF</fullName>
    </recommendedName>
</protein>
<accession>A7ZZR4</accession>